<name>RL25_HISS2</name>
<keyword id="KW-0687">Ribonucleoprotein</keyword>
<keyword id="KW-0689">Ribosomal protein</keyword>
<keyword id="KW-0694">RNA-binding</keyword>
<keyword id="KW-0699">rRNA-binding</keyword>
<accession>B0UU73</accession>
<dbReference type="EMBL" id="CP000947">
    <property type="protein sequence ID" value="ACA31088.1"/>
    <property type="molecule type" value="Genomic_DNA"/>
</dbReference>
<dbReference type="RefSeq" id="WP_011609026.1">
    <property type="nucleotide sequence ID" value="NC_010519.1"/>
</dbReference>
<dbReference type="SMR" id="B0UU73"/>
<dbReference type="STRING" id="228400.HSM_1352"/>
<dbReference type="GeneID" id="31487650"/>
<dbReference type="KEGG" id="hsm:HSM_1352"/>
<dbReference type="HOGENOM" id="CLU_137946_0_0_6"/>
<dbReference type="GO" id="GO:0022625">
    <property type="term" value="C:cytosolic large ribosomal subunit"/>
    <property type="evidence" value="ECO:0007669"/>
    <property type="project" value="TreeGrafter"/>
</dbReference>
<dbReference type="GO" id="GO:0008097">
    <property type="term" value="F:5S rRNA binding"/>
    <property type="evidence" value="ECO:0007669"/>
    <property type="project" value="InterPro"/>
</dbReference>
<dbReference type="GO" id="GO:0003735">
    <property type="term" value="F:structural constituent of ribosome"/>
    <property type="evidence" value="ECO:0007669"/>
    <property type="project" value="InterPro"/>
</dbReference>
<dbReference type="GO" id="GO:0006412">
    <property type="term" value="P:translation"/>
    <property type="evidence" value="ECO:0007669"/>
    <property type="project" value="UniProtKB-UniRule"/>
</dbReference>
<dbReference type="CDD" id="cd00495">
    <property type="entry name" value="Ribosomal_L25_TL5_CTC"/>
    <property type="match status" value="1"/>
</dbReference>
<dbReference type="FunFam" id="2.40.240.10:FF:000002">
    <property type="entry name" value="50S ribosomal protein L25"/>
    <property type="match status" value="1"/>
</dbReference>
<dbReference type="Gene3D" id="2.40.240.10">
    <property type="entry name" value="Ribosomal Protein L25, Chain P"/>
    <property type="match status" value="1"/>
</dbReference>
<dbReference type="HAMAP" id="MF_01336">
    <property type="entry name" value="Ribosomal_bL25"/>
    <property type="match status" value="1"/>
</dbReference>
<dbReference type="InterPro" id="IPR020056">
    <property type="entry name" value="Rbsml_bL25/Gln-tRNA_synth_N"/>
</dbReference>
<dbReference type="InterPro" id="IPR011035">
    <property type="entry name" value="Ribosomal_bL25/Gln-tRNA_synth"/>
</dbReference>
<dbReference type="InterPro" id="IPR020055">
    <property type="entry name" value="Ribosomal_bL25_short"/>
</dbReference>
<dbReference type="InterPro" id="IPR029751">
    <property type="entry name" value="Ribosomal_L25_dom"/>
</dbReference>
<dbReference type="InterPro" id="IPR020930">
    <property type="entry name" value="Ribosomal_uL5_bac-type"/>
</dbReference>
<dbReference type="NCBIfam" id="NF004612">
    <property type="entry name" value="PRK05943.1"/>
    <property type="match status" value="1"/>
</dbReference>
<dbReference type="PANTHER" id="PTHR33284">
    <property type="entry name" value="RIBOSOMAL PROTEIN L25/GLN-TRNA SYNTHETASE, ANTI-CODON-BINDING DOMAIN-CONTAINING PROTEIN"/>
    <property type="match status" value="1"/>
</dbReference>
<dbReference type="PANTHER" id="PTHR33284:SF1">
    <property type="entry name" value="RIBOSOMAL PROTEIN L25_GLN-TRNA SYNTHETASE, ANTI-CODON-BINDING DOMAIN-CONTAINING PROTEIN"/>
    <property type="match status" value="1"/>
</dbReference>
<dbReference type="Pfam" id="PF01386">
    <property type="entry name" value="Ribosomal_L25p"/>
    <property type="match status" value="1"/>
</dbReference>
<dbReference type="SUPFAM" id="SSF50715">
    <property type="entry name" value="Ribosomal protein L25-like"/>
    <property type="match status" value="1"/>
</dbReference>
<reference key="1">
    <citation type="submission" date="2008-02" db="EMBL/GenBank/DDBJ databases">
        <title>Complete sequence of Haemophilus somnus 2336.</title>
        <authorList>
            <consortium name="US DOE Joint Genome Institute"/>
            <person name="Siddaramappa S."/>
            <person name="Duncan A.J."/>
            <person name="Challacombe J.F."/>
            <person name="Rainey D."/>
            <person name="Gillaspy A.F."/>
            <person name="Carson M."/>
            <person name="Gipson J."/>
            <person name="Gipson M."/>
            <person name="Bruce D."/>
            <person name="Detter J.C."/>
            <person name="Han C.S."/>
            <person name="Land M."/>
            <person name="Tapia R."/>
            <person name="Thompson L.S."/>
            <person name="Orvis J."/>
            <person name="Zaitshik J."/>
            <person name="Barnes G."/>
            <person name="Brettin T.S."/>
            <person name="Dyer D.W."/>
            <person name="Inzana T.J."/>
        </authorList>
    </citation>
    <scope>NUCLEOTIDE SEQUENCE [LARGE SCALE GENOMIC DNA]</scope>
    <source>
        <strain>2336</strain>
    </source>
</reference>
<sequence>MSFKFNAEVRSKQGKGASRRLRHNGQIPAIVYGGSEAPVSIVLNHDELNNAQIHDSFYSDTIILVIEGKEISVKVQAMQRHPFKPKLVHIDFKRV</sequence>
<protein>
    <recommendedName>
        <fullName evidence="1">Large ribosomal subunit protein bL25</fullName>
    </recommendedName>
    <alternativeName>
        <fullName evidence="3">50S ribosomal protein L25</fullName>
    </alternativeName>
</protein>
<proteinExistence type="inferred from homology"/>
<evidence type="ECO:0000255" key="1">
    <source>
        <dbReference type="HAMAP-Rule" id="MF_01336"/>
    </source>
</evidence>
<evidence type="ECO:0000256" key="2">
    <source>
        <dbReference type="SAM" id="MobiDB-lite"/>
    </source>
</evidence>
<evidence type="ECO:0000305" key="3"/>
<gene>
    <name evidence="1" type="primary">rplY</name>
    <name type="ordered locus">HSM_1352</name>
</gene>
<feature type="chain" id="PRO_1000086640" description="Large ribosomal subunit protein bL25">
    <location>
        <begin position="1"/>
        <end position="95"/>
    </location>
</feature>
<feature type="region of interest" description="Disordered" evidence="2">
    <location>
        <begin position="1"/>
        <end position="20"/>
    </location>
</feature>
<organism>
    <name type="scientific">Histophilus somni (strain 2336)</name>
    <name type="common">Haemophilus somnus</name>
    <dbReference type="NCBI Taxonomy" id="228400"/>
    <lineage>
        <taxon>Bacteria</taxon>
        <taxon>Pseudomonadati</taxon>
        <taxon>Pseudomonadota</taxon>
        <taxon>Gammaproteobacteria</taxon>
        <taxon>Pasteurellales</taxon>
        <taxon>Pasteurellaceae</taxon>
        <taxon>Histophilus</taxon>
    </lineage>
</organism>
<comment type="function">
    <text evidence="1">This is one of the proteins that binds to the 5S RNA in the ribosome where it forms part of the central protuberance.</text>
</comment>
<comment type="subunit">
    <text evidence="1">Part of the 50S ribosomal subunit; part of the 5S rRNA/L5/L18/L25 subcomplex. Contacts the 5S rRNA. Binds to the 5S rRNA independently of L5 and L18.</text>
</comment>
<comment type="similarity">
    <text evidence="1">Belongs to the bacterial ribosomal protein bL25 family.</text>
</comment>